<feature type="chain" id="PRO_0000420379" description="Transcriptional regulator WhiB1">
    <location>
        <begin position="1"/>
        <end position="84"/>
    </location>
</feature>
<feature type="domain" description="4Fe-4S Wbl-type">
    <location>
        <begin position="8"/>
        <end position="70"/>
    </location>
</feature>
<feature type="binding site" evidence="10">
    <location>
        <position position="9"/>
    </location>
    <ligand>
        <name>[4Fe-4S] cluster</name>
        <dbReference type="ChEBI" id="CHEBI:49883"/>
    </ligand>
</feature>
<feature type="binding site" evidence="10">
    <location>
        <position position="37"/>
    </location>
    <ligand>
        <name>[4Fe-4S] cluster</name>
        <dbReference type="ChEBI" id="CHEBI:49883"/>
    </ligand>
</feature>
<feature type="binding site" evidence="10">
    <location>
        <position position="40"/>
    </location>
    <ligand>
        <name>[4Fe-4S] cluster</name>
        <dbReference type="ChEBI" id="CHEBI:49883"/>
    </ligand>
</feature>
<feature type="binding site" evidence="10">
    <location>
        <position position="46"/>
    </location>
    <ligand>
        <name>[4Fe-4S] cluster</name>
        <dbReference type="ChEBI" id="CHEBI:49883"/>
    </ligand>
</feature>
<feature type="mutagenesis site" description="Does not bind 4Fe-4S cluster, binds DNA." evidence="9">
    <original>C</original>
    <variation>A</variation>
    <location>
        <position position="9"/>
    </location>
</feature>
<feature type="mutagenesis site" description="No change in 4Fe-4S cluster, binds DNA." evidence="9">
    <original>D</original>
    <variation>A</variation>
    <location>
        <position position="13"/>
    </location>
</feature>
<feature type="mutagenesis site" description="Does not bind 4Fe-4S cluster, binds DNA." evidence="9">
    <original>C</original>
    <variation>A</variation>
    <location>
        <position position="37"/>
    </location>
</feature>
<feature type="mutagenesis site" description="Does not bind 4Fe-4S cluster, binds DNA." evidence="9">
    <original>C</original>
    <variation>A</variation>
    <location>
        <position position="40"/>
    </location>
</feature>
<feature type="mutagenesis site" description="Does not bind 4Fe-4S cluster, binds DNA." evidence="9">
    <original>C</original>
    <variation>A</variation>
    <location>
        <position position="46"/>
    </location>
</feature>
<feature type="mutagenesis site" description="Still binds DNA." evidence="9">
    <original>S</original>
    <variation>E</variation>
    <location>
        <position position="57"/>
    </location>
</feature>
<feature type="mutagenesis site" description="Loss of DNA-binding, still binds 4Fe-4S cluster." evidence="9">
    <original>G</original>
    <variation>E</variation>
    <location>
        <position position="58"/>
    </location>
</feature>
<feature type="mutagenesis site" description="Still binds DNA." evidence="9">
    <original>V</original>
    <variation>E</variation>
    <location>
        <position position="59"/>
    </location>
</feature>
<feature type="mutagenesis site" description="Still binds DNA." evidence="9">
    <original>W</original>
    <variation>E</variation>
    <location>
        <position position="60"/>
    </location>
</feature>
<feature type="mutagenesis site" description="Loss of DNA-binding, still binds 4Fe-4S cluster." evidence="9">
    <original>G</original>
    <variation>E</variation>
    <location>
        <position position="61"/>
    </location>
</feature>
<feature type="mutagenesis site" description="Loss of DNA-binding, still binds 4Fe-4S cluster." evidence="9">
    <original>G</original>
    <variation>E</variation>
    <location>
        <position position="62"/>
    </location>
</feature>
<feature type="mutagenesis site" description="Loss of 4Fe-4S cluster, loss of DNA-binding." evidence="9">
    <original>K</original>
    <variation>E</variation>
    <location>
        <position position="72"/>
    </location>
</feature>
<feature type="mutagenesis site" description="Loss of 4Fe-4S cluster, loss of DNA-binding." evidence="9">
    <original>R</original>
    <variation>E</variation>
    <location>
        <position position="73"/>
    </location>
</feature>
<feature type="mutagenesis site" description="Loss of 4Fe-4S cluster, loss of DNA-binding." evidence="9">
    <original>R</original>
    <variation>E</variation>
    <location>
        <position position="74"/>
    </location>
</feature>
<feature type="mutagenesis site" description="Loss of 4Fe-4S cluster, loss of DNA-binding." evidence="9">
    <original>K</original>
    <variation>E</variation>
    <location>
        <position position="79"/>
    </location>
</feature>
<feature type="mutagenesis site" description="Loss of 4Fe-4S cluster, loss of DNA-binding." evidence="9">
    <original>R</original>
    <variation>E</variation>
    <location>
        <position position="81"/>
    </location>
</feature>
<feature type="helix" evidence="12">
    <location>
        <begin position="3"/>
        <end position="6"/>
    </location>
</feature>
<feature type="helix" evidence="12">
    <location>
        <begin position="8"/>
        <end position="11"/>
    </location>
</feature>
<feature type="helix" evidence="12">
    <location>
        <begin position="14"/>
        <end position="17"/>
    </location>
</feature>
<feature type="strand" evidence="12">
    <location>
        <begin position="22"/>
        <end position="24"/>
    </location>
</feature>
<feature type="helix" evidence="12">
    <location>
        <begin position="27"/>
        <end position="38"/>
    </location>
</feature>
<feature type="helix" evidence="12">
    <location>
        <begin position="43"/>
        <end position="53"/>
    </location>
</feature>
<feature type="strand" evidence="11">
    <location>
        <begin position="58"/>
        <end position="60"/>
    </location>
</feature>
<feature type="helix" evidence="12">
    <location>
        <begin position="65"/>
        <end position="71"/>
    </location>
</feature>
<dbReference type="EMBL" id="AL123456">
    <property type="protein sequence ID" value="CCP46035.1"/>
    <property type="molecule type" value="Genomic_DNA"/>
</dbReference>
<dbReference type="PIR" id="D70596">
    <property type="entry name" value="D70596"/>
</dbReference>
<dbReference type="RefSeq" id="NP_217735.1">
    <property type="nucleotide sequence ID" value="NC_000962.3"/>
</dbReference>
<dbReference type="RefSeq" id="WP_003416884.1">
    <property type="nucleotide sequence ID" value="NZ_NVQJ01000003.1"/>
</dbReference>
<dbReference type="PDB" id="5OAY">
    <property type="method" value="NMR"/>
    <property type="chains" value="A=1-84"/>
</dbReference>
<dbReference type="PDB" id="6ONO">
    <property type="method" value="X-ray"/>
    <property type="resolution" value="1.85 A"/>
    <property type="chains" value="A/C=1-76"/>
</dbReference>
<dbReference type="PDB" id="6ONU">
    <property type="method" value="X-ray"/>
    <property type="resolution" value="1.85 A"/>
    <property type="chains" value="A/C/E/G=1-76"/>
</dbReference>
<dbReference type="PDBsum" id="5OAY"/>
<dbReference type="PDBsum" id="6ONO"/>
<dbReference type="PDBsum" id="6ONU"/>
<dbReference type="SMR" id="P9WF43"/>
<dbReference type="STRING" id="83332.Rv3219"/>
<dbReference type="PaxDb" id="83332-Rv3219"/>
<dbReference type="DNASU" id="887980"/>
<dbReference type="GeneID" id="45427212"/>
<dbReference type="GeneID" id="887980"/>
<dbReference type="KEGG" id="mtu:Rv3219"/>
<dbReference type="KEGG" id="mtv:RVBD_3219"/>
<dbReference type="TubercuList" id="Rv3219"/>
<dbReference type="eggNOG" id="ENOG5032RSG">
    <property type="taxonomic scope" value="Bacteria"/>
</dbReference>
<dbReference type="InParanoid" id="P9WF43"/>
<dbReference type="OrthoDB" id="8104048at2"/>
<dbReference type="PhylomeDB" id="P9WF43"/>
<dbReference type="Proteomes" id="UP000001584">
    <property type="component" value="Chromosome"/>
</dbReference>
<dbReference type="GO" id="GO:0005737">
    <property type="term" value="C:cytoplasm"/>
    <property type="evidence" value="ECO:0007669"/>
    <property type="project" value="UniProtKB-SubCell"/>
</dbReference>
<dbReference type="GO" id="GO:0051539">
    <property type="term" value="F:4 iron, 4 sulfur cluster binding"/>
    <property type="evidence" value="ECO:0000314"/>
    <property type="project" value="MTBBASE"/>
</dbReference>
<dbReference type="GO" id="GO:0035731">
    <property type="term" value="F:dinitrosyl-iron complex binding"/>
    <property type="evidence" value="ECO:0007669"/>
    <property type="project" value="UniProtKB-UniRule"/>
</dbReference>
<dbReference type="GO" id="GO:0003677">
    <property type="term" value="F:DNA binding"/>
    <property type="evidence" value="ECO:0000314"/>
    <property type="project" value="MTBBASE"/>
</dbReference>
<dbReference type="GO" id="GO:0046872">
    <property type="term" value="F:metal ion binding"/>
    <property type="evidence" value="ECO:0007669"/>
    <property type="project" value="UniProtKB-KW"/>
</dbReference>
<dbReference type="GO" id="GO:0047134">
    <property type="term" value="F:protein-disulfide reductase [NAD(P)H] activity"/>
    <property type="evidence" value="ECO:0000314"/>
    <property type="project" value="MTBBASE"/>
</dbReference>
<dbReference type="GO" id="GO:0015035">
    <property type="term" value="F:protein-disulfide reductase activity"/>
    <property type="evidence" value="ECO:0000314"/>
    <property type="project" value="MTBBASE"/>
</dbReference>
<dbReference type="GO" id="GO:0045454">
    <property type="term" value="P:cell redox homeostasis"/>
    <property type="evidence" value="ECO:0000318"/>
    <property type="project" value="GO_Central"/>
</dbReference>
<dbReference type="GO" id="GO:0045892">
    <property type="term" value="P:negative regulation of DNA-templated transcription"/>
    <property type="evidence" value="ECO:0000314"/>
    <property type="project" value="CACAO"/>
</dbReference>
<dbReference type="GO" id="GO:0071731">
    <property type="term" value="P:response to nitric oxide"/>
    <property type="evidence" value="ECO:0000314"/>
    <property type="project" value="MTBBASE"/>
</dbReference>
<dbReference type="HAMAP" id="MF_01479">
    <property type="entry name" value="WhiB"/>
    <property type="match status" value="1"/>
</dbReference>
<dbReference type="InterPro" id="IPR034768">
    <property type="entry name" value="4FE4S_WBL"/>
</dbReference>
<dbReference type="InterPro" id="IPR003482">
    <property type="entry name" value="Whib"/>
</dbReference>
<dbReference type="PANTHER" id="PTHR38839:SF6">
    <property type="entry name" value="TRANSCRIPTIONAL REGULATOR WHIB1"/>
    <property type="match status" value="1"/>
</dbReference>
<dbReference type="PANTHER" id="PTHR38839">
    <property type="entry name" value="TRANSCRIPTIONAL REGULATOR WHID-RELATED"/>
    <property type="match status" value="1"/>
</dbReference>
<dbReference type="Pfam" id="PF02467">
    <property type="entry name" value="Whib"/>
    <property type="match status" value="1"/>
</dbReference>
<dbReference type="PROSITE" id="PS51674">
    <property type="entry name" value="4FE4S_WBL"/>
    <property type="match status" value="1"/>
</dbReference>
<keyword id="KW-0002">3D-structure</keyword>
<keyword id="KW-0004">4Fe-4S</keyword>
<keyword id="KW-0963">Cytoplasm</keyword>
<keyword id="KW-1015">Disulfide bond</keyword>
<keyword id="KW-0238">DNA-binding</keyword>
<keyword id="KW-0408">Iron</keyword>
<keyword id="KW-0411">Iron-sulfur</keyword>
<keyword id="KW-0479">Metal-binding</keyword>
<keyword id="KW-1185">Reference proteome</keyword>
<keyword id="KW-0804">Transcription</keyword>
<keyword id="KW-0805">Transcription regulation</keyword>
<comment type="function">
    <text evidence="3 4 7 8">Acts as a transcriptional repressor, inhibiting expression in vitro. Probably redox-responsive. The apo- but not holo-form binds to its own promoter as well as that of groEL2. Oxidized apo-form and nitrosylated holo-form also bind DNA. The apo-form has been shown to act as a protein disulfide reductase (PubMed:17157031) (PubMed:19016840), but also not to act as a protein disulfide reductase (PubMed:20929442).</text>
</comment>
<comment type="cofactor">
    <cofactor evidence="4 7">
        <name>[4Fe-4S] cluster</name>
        <dbReference type="ChEBI" id="CHEBI:49883"/>
    </cofactor>
    <text evidence="4 7">Binds 1 [4Fe-4S] cluster per subunit. This cluster is stable to O(2) but very reactive to nitric oxide (NO). Following nitrosylation of the [4Fe-4S] cluster binds 1 [4Fe-8(NO)] cluster per subunit.</text>
</comment>
<comment type="biophysicochemical properties">
    <redoxPotential>
        <text evidence="3">E(0) is -236 +/-2 mV.</text>
    </redoxPotential>
</comment>
<comment type="subunit">
    <text evidence="3 5">Homodimer. Interacts with GlgB via an intermolecular disulfide bond.</text>
</comment>
<comment type="subcellular location">
    <subcellularLocation>
        <location evidence="1">Cytoplasm</location>
    </subcellularLocation>
</comment>
<comment type="induction">
    <text evidence="2 6">Activated by CRP. Essentially constitutive over all growth phases. 2-fold induced by ethanol, repressed by SDS and heat shock. Not induced by hypoxia, slightly induced by NO and in macrophage and mouse infection, 10-fold induced by cAMP. There are 2 CRP-binding sites in the promoter of whiB1, at low concentrations of CRP with or without cAMP transcription of whiB1 is enhanced via site CRP1, then repressed as site CRP2 is filled.</text>
</comment>
<comment type="PTM">
    <text>Can be nitrosylated by NO, 8 NO react per cluster leading to the formation of 2 dinitrosyliron thiol complexes (DNIC). These complexes are quite stable in the presence of air.</text>
</comment>
<comment type="PTM">
    <text>Upon aerobic 4Fe-4S cluster removal intramolecular disulfide bonds are formed.</text>
</comment>
<comment type="mass spectrometry">
    <text>Fully oxidized recombinant protein tagged at both termini.</text>
</comment>
<comment type="mass spectrometry">
    <text>For fully alkylated recombinant protein tagged at both termini.</text>
</comment>
<comment type="disruption phenotype">
    <text evidence="7">Essential.</text>
</comment>
<comment type="similarity">
    <text evidence="10">Belongs to the WhiB family.</text>
</comment>
<sequence>MDWRHKAVCRDEDPELFFPVGNSGPALAQIADAKLVCNRCPVTTECLSWALNTGQDSGVWGGMSEDERRALKRRNARTKARTGV</sequence>
<reference key="1">
    <citation type="journal article" date="1998" name="Nature">
        <title>Deciphering the biology of Mycobacterium tuberculosis from the complete genome sequence.</title>
        <authorList>
            <person name="Cole S.T."/>
            <person name="Brosch R."/>
            <person name="Parkhill J."/>
            <person name="Garnier T."/>
            <person name="Churcher C.M."/>
            <person name="Harris D.E."/>
            <person name="Gordon S.V."/>
            <person name="Eiglmeier K."/>
            <person name="Gas S."/>
            <person name="Barry C.E. III"/>
            <person name="Tekaia F."/>
            <person name="Badcock K."/>
            <person name="Basham D."/>
            <person name="Brown D."/>
            <person name="Chillingworth T."/>
            <person name="Connor R."/>
            <person name="Davies R.M."/>
            <person name="Devlin K."/>
            <person name="Feltwell T."/>
            <person name="Gentles S."/>
            <person name="Hamlin N."/>
            <person name="Holroyd S."/>
            <person name="Hornsby T."/>
            <person name="Jagels K."/>
            <person name="Krogh A."/>
            <person name="McLean J."/>
            <person name="Moule S."/>
            <person name="Murphy L.D."/>
            <person name="Oliver S."/>
            <person name="Osborne J."/>
            <person name="Quail M.A."/>
            <person name="Rajandream M.A."/>
            <person name="Rogers J."/>
            <person name="Rutter S."/>
            <person name="Seeger K."/>
            <person name="Skelton S."/>
            <person name="Squares S."/>
            <person name="Squares R."/>
            <person name="Sulston J.E."/>
            <person name="Taylor K."/>
            <person name="Whitehead S."/>
            <person name="Barrell B.G."/>
        </authorList>
    </citation>
    <scope>NUCLEOTIDE SEQUENCE [LARGE SCALE GENOMIC DNA]</scope>
    <source>
        <strain>ATCC 25618 / H37Rv</strain>
    </source>
</reference>
<reference key="2">
    <citation type="journal article" date="2005" name="Mol. Microbiol.">
        <title>A member of the cAMP receptor protein family of transcription regulators in Mycobacterium tuberculosis is required for virulence in mice and controls transcription of the rpfA gene coding for a resuscitation promoting factor.</title>
        <authorList>
            <person name="Rickman L."/>
            <person name="Scott C."/>
            <person name="Hunt D.M."/>
            <person name="Hutchinson T."/>
            <person name="Menendez M.C."/>
            <person name="Whalan R."/>
            <person name="Hinds J."/>
            <person name="Colston M.J."/>
            <person name="Green J."/>
            <person name="Buxton R.S."/>
        </authorList>
    </citation>
    <scope>INDUCTION</scope>
    <source>
        <strain>ATCC 25618 / H37Rv</strain>
    </source>
</reference>
<reference key="3">
    <citation type="journal article" date="2007" name="Protein Expr. Purif.">
        <title>Characterization of Mycobacterium tuberculosis WhiB1/Rv3219 as a protein disulfide reductase.</title>
        <authorList>
            <person name="Garg S.K."/>
            <person name="Suhail Alam M."/>
            <person name="Soni V."/>
            <person name="Radha Kishan K.V."/>
            <person name="Agrawal P."/>
        </authorList>
    </citation>
    <scope>FUNCTION AS A PROTEIN DISULFIDE REDUCTASE</scope>
    <scope>BIOPHYSICOCHEMICAL PROPERTIES</scope>
    <scope>MASS SPECTROMETRY</scope>
    <scope>SUBUNIT</scope>
    <scope>DISULFIDE BONDS</scope>
    <source>
        <strain>ATCC 25618 / H37Rv</strain>
    </source>
</reference>
<reference key="4">
    <citation type="journal article" date="2009" name="BMC Biochem.">
        <title>Redox biology of Mycobacterium tuberculosis H37Rv: protein-protein interaction between GlgB and WhiB1 involves exchange of thiol-disulfide.</title>
        <authorList>
            <person name="Garg S."/>
            <person name="Alam M.S."/>
            <person name="Bajpai R."/>
            <person name="Kishan K.R."/>
            <person name="Agrawal P."/>
        </authorList>
    </citation>
    <scope>INTERACTION WITH GLGB</scope>
    <source>
        <strain>ATCC 25618 / H37Rv</strain>
    </source>
</reference>
<reference key="5">
    <citation type="journal article" date="2009" name="FEBS J.">
        <title>Studies on structural and functional divergence among seven WhiB proteins of Mycobacterium tuberculosis H37Rv.</title>
        <authorList>
            <person name="Alam M.S."/>
            <person name="Garg S.K."/>
            <person name="Agrawal P."/>
        </authorList>
    </citation>
    <scope>FUNCTION AS A PROTEIN DISULFIDE REDUCTASE</scope>
    <scope>COFACTOR</scope>
    <scope>DISULFIDE BOND</scope>
    <source>
        <strain>ATCC 25618 / H37Rv</strain>
    </source>
</reference>
<reference key="6">
    <citation type="journal article" date="2010" name="Biochem. J.">
        <title>Mycobacterium tuberculosis WhiB1 is an essential DNA-binding protein with a nitric oxide-sensitive iron-sulfur cluster.</title>
        <authorList>
            <person name="Smith L.J."/>
            <person name="Stapleton M.R."/>
            <person name="Fullstone G.J."/>
            <person name="Crack J.C."/>
            <person name="Thomson A.J."/>
            <person name="Le Brun N.E."/>
            <person name="Hunt D.M."/>
            <person name="Harvey E."/>
            <person name="Adinolfi S."/>
            <person name="Buxton R.S."/>
            <person name="Green J."/>
        </authorList>
    </citation>
    <scope>FUNCTION</scope>
    <scope>COFACTOR</scope>
    <scope>DINITROSYLATION</scope>
    <scope>DNA-BINDING</scope>
    <scope>DISRUPTION PHENOTYPE</scope>
    <source>
        <strain>ATCC 25618 / H37Rv</strain>
    </source>
</reference>
<reference key="7">
    <citation type="journal article" date="2010" name="J. Biol. Chem.">
        <title>Mycobacterium tuberculosis cAMP receptor protein (Rv3676) differs from the Escherichia coli paradigm in its cAMP binding and DNA binding properties and transcription activation properties.</title>
        <authorList>
            <person name="Stapleton M."/>
            <person name="Haq I."/>
            <person name="Hunt D.M."/>
            <person name="Arnvig K.B."/>
            <person name="Artymiuk P.J."/>
            <person name="Buxton R.S."/>
            <person name="Green J."/>
        </authorList>
    </citation>
    <scope>INDUCTION</scope>
    <source>
        <strain>ATCC 25618 / H37Rv</strain>
    </source>
</reference>
<reference key="8">
    <citation type="journal article" date="2011" name="J. Am. Chem. Soc.">
        <title>Mechanistic insight into the nitrosylation of the [4Fe-4S] cluster of WhiB-like proteins.</title>
        <authorList>
            <person name="Crack J.C."/>
            <person name="Smith L.J."/>
            <person name="Stapleton M.R."/>
            <person name="Peck J."/>
            <person name="Watmough N.J."/>
            <person name="Buttner M.J."/>
            <person name="Buxton R.S."/>
            <person name="Green J."/>
            <person name="Oganesyan V.S."/>
            <person name="Thomson A.J."/>
            <person name="Le Brun N.E."/>
        </authorList>
    </citation>
    <scope>DINITROSYLATION</scope>
    <source>
        <strain>ATCC 25618 / H37Rv</strain>
    </source>
</reference>
<reference key="9">
    <citation type="journal article" date="2012" name="PLoS ONE">
        <title>Structure-function relationships of the Mycobacterium tuberculosis transcription factor WhiB1.</title>
        <authorList>
            <person name="Smith L.J."/>
            <person name="Stapleton M.R."/>
            <person name="Buxton R.S."/>
            <person name="Green J."/>
        </authorList>
    </citation>
    <scope>MUTAGENESIS OF CYS-9; ASP-13; CYS-37; CYS-40; CYS-46; SER-57; GLY-58; VAL-59; TRP-60; GLY-61; GLY-62; LYS-72; ARG-73; ARG-74; LYS-79 AND ARG-81</scope>
</reference>
<reference key="10">
    <citation type="journal article" date="2012" name="Tuberculosis">
        <title>Mycobacterium tuberculosis WhiB1 represses transcription of the essential chaperonin GroEL2.</title>
        <authorList>
            <person name="Stapleton M.R."/>
            <person name="Smith L.J."/>
            <person name="Hunt D.M."/>
            <person name="Buxton R.S."/>
            <person name="Green J."/>
        </authorList>
    </citation>
    <scope>FUNCTION IN TRANSCRIPTIONAL REPRESSION</scope>
    <scope>DNA-BINDING</scope>
</reference>
<gene>
    <name type="primary">whiB1</name>
    <name type="ordered locus">Rv3219</name>
</gene>
<organism>
    <name type="scientific">Mycobacterium tuberculosis (strain ATCC 25618 / H37Rv)</name>
    <dbReference type="NCBI Taxonomy" id="83332"/>
    <lineage>
        <taxon>Bacteria</taxon>
        <taxon>Bacillati</taxon>
        <taxon>Actinomycetota</taxon>
        <taxon>Actinomycetes</taxon>
        <taxon>Mycobacteriales</taxon>
        <taxon>Mycobacteriaceae</taxon>
        <taxon>Mycobacterium</taxon>
        <taxon>Mycobacterium tuberculosis complex</taxon>
    </lineage>
</organism>
<name>WHIB1_MYCTU</name>
<protein>
    <recommendedName>
        <fullName>Transcriptional regulator WhiB1</fullName>
    </recommendedName>
</protein>
<accession>P9WF43</accession>
<accession>F2GK92</accession>
<accession>L0TEP0</accession>
<accession>O05847</accession>
<accession>Q7D5W8</accession>
<proteinExistence type="evidence at protein level"/>
<evidence type="ECO:0000250" key="1"/>
<evidence type="ECO:0000269" key="2">
    <source>
    </source>
</evidence>
<evidence type="ECO:0000269" key="3">
    <source>
    </source>
</evidence>
<evidence type="ECO:0000269" key="4">
    <source>
    </source>
</evidence>
<evidence type="ECO:0000269" key="5">
    <source>
    </source>
</evidence>
<evidence type="ECO:0000269" key="6">
    <source>
    </source>
</evidence>
<evidence type="ECO:0000269" key="7">
    <source>
    </source>
</evidence>
<evidence type="ECO:0000269" key="8">
    <source>
    </source>
</evidence>
<evidence type="ECO:0000269" key="9">
    <source>
    </source>
</evidence>
<evidence type="ECO:0000305" key="10"/>
<evidence type="ECO:0007829" key="11">
    <source>
        <dbReference type="PDB" id="5OAY"/>
    </source>
</evidence>
<evidence type="ECO:0007829" key="12">
    <source>
        <dbReference type="PDB" id="6ONO"/>
    </source>
</evidence>